<gene>
    <name type="primary">TAF1B</name>
</gene>
<protein>
    <recommendedName>
        <fullName>TATA box-binding protein-associated factor RNA polymerase I subunit B</fullName>
    </recommendedName>
    <alternativeName>
        <fullName>RNA polymerase I-specific TBP-associated factor 63 kDa</fullName>
        <shortName>TAFI63</shortName>
    </alternativeName>
    <alternativeName>
        <fullName>TATA box-binding protein-associated factor 1B</fullName>
        <shortName>TBP-associated factor 1B</shortName>
    </alternativeName>
    <alternativeName>
        <fullName>Transcription initiation factor SL1/TIF-IB subunit B</fullName>
    </alternativeName>
</protein>
<comment type="function">
    <text evidence="2 3 6 7 8 9 10 11">Component of RNA polymerase I core factor complex that acts as a GTF2B/TFIIB-like factor and plays a key role in multiple steps during transcription initiation such as pre-initiation complex (PIC) assembly and postpolymerase recruitment events in polymerase I (Pol I) transcription. Binds rDNA promoters and plays a role in Pol I recruitment as a component of the SL1/TIF-IB complex and, possibly, directly through its interaction with RRN3.</text>
</comment>
<comment type="subunit">
    <text evidence="1 2 3 10">Interacts with FLNA (via N-terminus) (By similarity). Component of the transcription factor SL1/TIF-IB complex, composed of TBP and at least TAF1A, TAF1B, TAF1C and TAF1D. In the complex interacts directly with TBP, TAF1A and TAF1C. Interaction of the SL1/TIF-IB subunits with TBP excludes interaction of TBP with the transcription factor IID (TFIID) subunits. Interacts with TBP and RRN3. Part of Pol I pre-initiation complex (PIC), in which Pol I core assembles with RRN3 and promoter-bound UTBF and SL1/TIF-IB complex.</text>
</comment>
<comment type="interaction">
    <interactant intactId="EBI-1560239">
        <id>Q53T94</id>
    </interactant>
    <interactant intactId="EBI-727618">
        <id>P49748</id>
        <label>ACADVL</label>
    </interactant>
    <organismsDiffer>false</organismsDiffer>
    <experiments>3</experiments>
</comment>
<comment type="interaction">
    <interactant intactId="EBI-1560239">
        <id>Q53T94</id>
    </interactant>
    <interactant intactId="EBI-1049597">
        <id>P27797</id>
        <label>CALR</label>
    </interactant>
    <organismsDiffer>false</organismsDiffer>
    <experiments>3</experiments>
</comment>
<comment type="interaction">
    <interactant intactId="EBI-1560239">
        <id>Q53T94</id>
    </interactant>
    <interactant intactId="EBI-16439278">
        <id>Q6FHY5</id>
        <label>MEOX2</label>
    </interactant>
    <organismsDiffer>false</organismsDiffer>
    <experiments>3</experiments>
</comment>
<comment type="interaction">
    <interactant intactId="EBI-1560239">
        <id>Q53T94</id>
    </interactant>
    <interactant intactId="EBI-1053182">
        <id>Q01105</id>
        <label>SET</label>
    </interactant>
    <organismsDiffer>false</organismsDiffer>
    <experiments>3</experiments>
</comment>
<comment type="interaction">
    <interactant intactId="EBI-1560239">
        <id>Q53T94</id>
    </interactant>
    <interactant intactId="EBI-2510647">
        <id>Q15573</id>
        <label>TAF1A</label>
    </interactant>
    <organismsDiffer>false</organismsDiffer>
    <experiments>3</experiments>
</comment>
<comment type="interaction">
    <interactant intactId="EBI-1560239">
        <id>Q53T94</id>
    </interactant>
    <interactant intactId="EBI-2510659">
        <id>Q15572</id>
        <label>TAF1C</label>
    </interactant>
    <organismsDiffer>false</organismsDiffer>
    <experiments>4</experiments>
</comment>
<comment type="interaction">
    <interactant intactId="EBI-1560239">
        <id>Q53T94</id>
    </interactant>
    <interactant intactId="EBI-355371">
        <id>P20226</id>
        <label>TBP</label>
    </interactant>
    <organismsDiffer>false</organismsDiffer>
    <experiments>5</experiments>
</comment>
<comment type="subcellular location">
    <subcellularLocation>
        <location evidence="14 15">Nucleus</location>
        <location evidence="14 15">Nucleolus</location>
    </subcellularLocation>
</comment>
<comment type="alternative products">
    <event type="alternative splicing"/>
    <isoform>
        <id>Q53T94-1</id>
        <name>1</name>
        <sequence type="displayed"/>
    </isoform>
    <isoform>
        <id>Q53T94-2</id>
        <name>2</name>
        <sequence type="described" ref="VSP_021677"/>
    </isoform>
    <isoform>
        <id>Q53T94-3</id>
        <name>3</name>
        <sequence type="described" ref="VSP_042954"/>
    </isoform>
</comment>
<comment type="domain">
    <text>Although it shares weak sequence similarity with GTF2B/TFIIB, displays a similar subdomain organization as GTF2B/TFIIB, with a N-terminal zinc finger, a connecting region (composed of B-reader and B-linker regions), followed by 2 cyclin folds. The RRN7-type zinc finger plays an essential postrecruitment role in Pol I transcription at a step preceding synthesis of the first 40 nucleotides (PubMed:21921198, PubMed:21921199).</text>
</comment>
<comment type="similarity">
    <text evidence="13">Belongs to the RRN7/TAF1B family.</text>
</comment>
<comment type="sequence caution" evidence="13">
    <conflict type="erroneous initiation">
        <sequence resource="EMBL-CDS" id="AAA62863"/>
    </conflict>
    <text>Extended N-terminus.</text>
</comment>
<sequence>MDLEEAEEFKERCTQCAAVSWGLTDEGKYYCTSCHNVTERYQEVTNTDLIPNTQIKALNRGLKKKNNTEKGWDWYVCEGFQYILYQQAEALKNLGVGPELKNDVLHNFWKRYLQKSKQAYCKNPVYTTGRKPTVLEDNLSHSDWASEPELLSDVSCPPFLESGAESQSDIHTRKPFPVSKASQSETSVCSGSLDGVEYSQRKEKGIVKMTMPQTLAFCYLSLLWQREAITLSDLLRFVEEDHIPYINAFQHFPEQMKLYGRDRGIFGIESWPDYEDIYKKTVEVGTFLDLPRFPDITEDCYLHPNILCMKYLMEVNLPDEMHSLTCHVVKMTGMGEVDFLTFDPIAKMAKTVKYDVQAVAIIVVVLKLLFLLDDSFEWSLSNLAEKHNEKNKKDKPWFDFRKWYQIMKKAFDEKKQKWEEARAKYLWKSEKPLYYSFVDKPVAYKKREMVVNLQKQFSTLVESTATAGKKSPSSFQFNWTEEDTDRTCFHGHSLQGVLKEKGQSLLTKNSLYWLSTQKFCRCYCTHVTTYEESNYSLSYQFILNLFSFLLRIKTSLLHEEVSLVEKKLFEKKYSVKRKKSRSKKVRRH</sequence>
<keyword id="KW-0007">Acetylation</keyword>
<keyword id="KW-0025">Alternative splicing</keyword>
<keyword id="KW-0903">Direct protein sequencing</keyword>
<keyword id="KW-0238">DNA-binding</keyword>
<keyword id="KW-0479">Metal-binding</keyword>
<keyword id="KW-0539">Nucleus</keyword>
<keyword id="KW-1267">Proteomics identification</keyword>
<keyword id="KW-1185">Reference proteome</keyword>
<keyword id="KW-0804">Transcription</keyword>
<keyword id="KW-0805">Transcription regulation</keyword>
<keyword id="KW-0862">Zinc</keyword>
<keyword id="KW-0863">Zinc-finger</keyword>
<proteinExistence type="evidence at protein level"/>
<organism>
    <name type="scientific">Homo sapiens</name>
    <name type="common">Human</name>
    <dbReference type="NCBI Taxonomy" id="9606"/>
    <lineage>
        <taxon>Eukaryota</taxon>
        <taxon>Metazoa</taxon>
        <taxon>Chordata</taxon>
        <taxon>Craniata</taxon>
        <taxon>Vertebrata</taxon>
        <taxon>Euteleostomi</taxon>
        <taxon>Mammalia</taxon>
        <taxon>Eutheria</taxon>
        <taxon>Euarchontoglires</taxon>
        <taxon>Primates</taxon>
        <taxon>Haplorrhini</taxon>
        <taxon>Catarrhini</taxon>
        <taxon>Hominidae</taxon>
        <taxon>Homo</taxon>
    </lineage>
</organism>
<name>TAF1B_HUMAN</name>
<dbReference type="EMBL" id="L39061">
    <property type="protein sequence ID" value="AAA62863.1"/>
    <property type="status" value="ALT_INIT"/>
    <property type="molecule type" value="mRNA"/>
</dbReference>
<dbReference type="EMBL" id="AK295402">
    <property type="protein sequence ID" value="BAG58354.1"/>
    <property type="molecule type" value="mRNA"/>
</dbReference>
<dbReference type="EMBL" id="AC010969">
    <property type="protein sequence ID" value="AAX93272.1"/>
    <property type="molecule type" value="Genomic_DNA"/>
</dbReference>
<dbReference type="EMBL" id="BC018137">
    <property type="protein sequence ID" value="AAH18137.1"/>
    <property type="molecule type" value="mRNA"/>
</dbReference>
<dbReference type="CCDS" id="CCDS33143.1">
    <molecule id="Q53T94-1"/>
</dbReference>
<dbReference type="PIR" id="I61581">
    <property type="entry name" value="I61581"/>
</dbReference>
<dbReference type="RefSeq" id="NP_001305905.1">
    <property type="nucleotide sequence ID" value="NM_001318976.1"/>
</dbReference>
<dbReference type="RefSeq" id="NP_005671.3">
    <molecule id="Q53T94-1"/>
    <property type="nucleotide sequence ID" value="NM_005680.3"/>
</dbReference>
<dbReference type="BioGRID" id="114483">
    <property type="interactions" value="99"/>
</dbReference>
<dbReference type="ComplexPortal" id="CPX-7978">
    <property type="entry name" value="RNA polymerase I selectivity factor 1 complex"/>
</dbReference>
<dbReference type="CORUM" id="Q53T94"/>
<dbReference type="FunCoup" id="Q53T94">
    <property type="interactions" value="2875"/>
</dbReference>
<dbReference type="IntAct" id="Q53T94">
    <property type="interactions" value="55"/>
</dbReference>
<dbReference type="MINT" id="Q53T94"/>
<dbReference type="STRING" id="9606.ENSP00000263663"/>
<dbReference type="iPTMnet" id="Q53T94"/>
<dbReference type="PhosphoSitePlus" id="Q53T94"/>
<dbReference type="BioMuta" id="TAF1B"/>
<dbReference type="DMDM" id="74726856"/>
<dbReference type="jPOST" id="Q53T94"/>
<dbReference type="MassIVE" id="Q53T94"/>
<dbReference type="PaxDb" id="9606-ENSP00000263663"/>
<dbReference type="PeptideAtlas" id="Q53T94"/>
<dbReference type="ProteomicsDB" id="62543">
    <molecule id="Q53T94-1"/>
</dbReference>
<dbReference type="ProteomicsDB" id="62544">
    <molecule id="Q53T94-2"/>
</dbReference>
<dbReference type="ProteomicsDB" id="62545">
    <molecule id="Q53T94-3"/>
</dbReference>
<dbReference type="Pumba" id="Q53T94"/>
<dbReference type="Antibodypedia" id="26617">
    <property type="antibodies" value="150 antibodies from 21 providers"/>
</dbReference>
<dbReference type="DNASU" id="9014"/>
<dbReference type="Ensembl" id="ENST00000263663.10">
    <molecule id="Q53T94-1"/>
    <property type="protein sequence ID" value="ENSP00000263663.4"/>
    <property type="gene ID" value="ENSG00000115750.17"/>
</dbReference>
<dbReference type="GeneID" id="9014"/>
<dbReference type="KEGG" id="hsa:9014"/>
<dbReference type="MANE-Select" id="ENST00000263663.10">
    <property type="protein sequence ID" value="ENSP00000263663.4"/>
    <property type="RefSeq nucleotide sequence ID" value="NM_005680.3"/>
    <property type="RefSeq protein sequence ID" value="NP_005671.3"/>
</dbReference>
<dbReference type="UCSC" id="uc002qzz.4">
    <molecule id="Q53T94-1"/>
    <property type="organism name" value="human"/>
</dbReference>
<dbReference type="AGR" id="HGNC:11533"/>
<dbReference type="CTD" id="9014"/>
<dbReference type="DisGeNET" id="9014"/>
<dbReference type="GeneCards" id="TAF1B"/>
<dbReference type="HGNC" id="HGNC:11533">
    <property type="gene designation" value="TAF1B"/>
</dbReference>
<dbReference type="HPA" id="ENSG00000115750">
    <property type="expression patterns" value="Low tissue specificity"/>
</dbReference>
<dbReference type="MIM" id="604904">
    <property type="type" value="gene"/>
</dbReference>
<dbReference type="neXtProt" id="NX_Q53T94"/>
<dbReference type="OpenTargets" id="ENSG00000115750"/>
<dbReference type="PharmGKB" id="PA36308"/>
<dbReference type="VEuPathDB" id="HostDB:ENSG00000115750"/>
<dbReference type="eggNOG" id="ENOG502QVGU">
    <property type="taxonomic scope" value="Eukaryota"/>
</dbReference>
<dbReference type="GeneTree" id="ENSGT00440000033827"/>
<dbReference type="HOGENOM" id="CLU_032815_0_0_1"/>
<dbReference type="InParanoid" id="Q53T94"/>
<dbReference type="OMA" id="SFRFCWG"/>
<dbReference type="OrthoDB" id="10069252at2759"/>
<dbReference type="PAN-GO" id="Q53T94">
    <property type="GO annotations" value="4 GO annotations based on evolutionary models"/>
</dbReference>
<dbReference type="PhylomeDB" id="Q53T94"/>
<dbReference type="TreeFam" id="TF324353"/>
<dbReference type="PathwayCommons" id="Q53T94"/>
<dbReference type="Reactome" id="R-HSA-427359">
    <property type="pathway name" value="SIRT1 negatively regulates rRNA expression"/>
</dbReference>
<dbReference type="Reactome" id="R-HSA-427413">
    <property type="pathway name" value="NoRC negatively regulates rRNA expression"/>
</dbReference>
<dbReference type="Reactome" id="R-HSA-5250924">
    <property type="pathway name" value="B-WICH complex positively regulates rRNA expression"/>
</dbReference>
<dbReference type="Reactome" id="R-HSA-73762">
    <property type="pathway name" value="RNA Polymerase I Transcription Initiation"/>
</dbReference>
<dbReference type="Reactome" id="R-HSA-73772">
    <property type="pathway name" value="RNA Polymerase I Promoter Escape"/>
</dbReference>
<dbReference type="Reactome" id="R-HSA-73863">
    <property type="pathway name" value="RNA Polymerase I Transcription Termination"/>
</dbReference>
<dbReference type="SignaLink" id="Q53T94"/>
<dbReference type="SIGNOR" id="Q53T94"/>
<dbReference type="BioGRID-ORCS" id="9014">
    <property type="hits" value="671 hits in 1165 CRISPR screens"/>
</dbReference>
<dbReference type="ChiTaRS" id="TAF1B">
    <property type="organism name" value="human"/>
</dbReference>
<dbReference type="GeneWiki" id="TAF1B"/>
<dbReference type="GenomeRNAi" id="9014"/>
<dbReference type="Pharos" id="Q53T94">
    <property type="development level" value="Tbio"/>
</dbReference>
<dbReference type="PRO" id="PR:Q53T94"/>
<dbReference type="Proteomes" id="UP000005640">
    <property type="component" value="Chromosome 2"/>
</dbReference>
<dbReference type="RNAct" id="Q53T94">
    <property type="molecule type" value="protein"/>
</dbReference>
<dbReference type="Bgee" id="ENSG00000115750">
    <property type="expression patterns" value="Expressed in male germ line stem cell (sensu Vertebrata) in testis and 176 other cell types or tissues"/>
</dbReference>
<dbReference type="ExpressionAtlas" id="Q53T94">
    <property type="expression patterns" value="baseline and differential"/>
</dbReference>
<dbReference type="GO" id="GO:0005730">
    <property type="term" value="C:nucleolus"/>
    <property type="evidence" value="ECO:0000314"/>
    <property type="project" value="HPA"/>
</dbReference>
<dbReference type="GO" id="GO:0005654">
    <property type="term" value="C:nucleoplasm"/>
    <property type="evidence" value="ECO:0000314"/>
    <property type="project" value="HPA"/>
</dbReference>
<dbReference type="GO" id="GO:0005634">
    <property type="term" value="C:nucleus"/>
    <property type="evidence" value="ECO:0000303"/>
    <property type="project" value="UniProtKB"/>
</dbReference>
<dbReference type="GO" id="GO:0070860">
    <property type="term" value="C:RNA polymerase I core factor complex"/>
    <property type="evidence" value="ECO:0000314"/>
    <property type="project" value="UniProtKB"/>
</dbReference>
<dbReference type="GO" id="GO:0005668">
    <property type="term" value="C:RNA polymerase transcription factor SL1 complex"/>
    <property type="evidence" value="ECO:0000314"/>
    <property type="project" value="UniProtKB"/>
</dbReference>
<dbReference type="GO" id="GO:0001164">
    <property type="term" value="F:RNA polymerase I core promoter sequence-specific DNA binding"/>
    <property type="evidence" value="ECO:0000314"/>
    <property type="project" value="UniProtKB"/>
</dbReference>
<dbReference type="GO" id="GO:0017025">
    <property type="term" value="F:TBP-class protein binding"/>
    <property type="evidence" value="ECO:0000304"/>
    <property type="project" value="UniProtKB"/>
</dbReference>
<dbReference type="GO" id="GO:0008270">
    <property type="term" value="F:zinc ion binding"/>
    <property type="evidence" value="ECO:0007669"/>
    <property type="project" value="UniProtKB-KW"/>
</dbReference>
<dbReference type="GO" id="GO:0006351">
    <property type="term" value="P:DNA-templated transcription"/>
    <property type="evidence" value="ECO:0000303"/>
    <property type="project" value="UniProtKB"/>
</dbReference>
<dbReference type="GO" id="GO:0042790">
    <property type="term" value="P:nucleolar large rRNA transcription by RNA polymerase I"/>
    <property type="evidence" value="ECO:0000318"/>
    <property type="project" value="GO_Central"/>
</dbReference>
<dbReference type="GO" id="GO:0001188">
    <property type="term" value="P:RNA polymerase I preinitiation complex assembly"/>
    <property type="evidence" value="ECO:0000314"/>
    <property type="project" value="UniProtKB"/>
</dbReference>
<dbReference type="InterPro" id="IPR048538">
    <property type="entry name" value="Rrn7_cyclin_C"/>
</dbReference>
<dbReference type="InterPro" id="IPR048540">
    <property type="entry name" value="Rrn7_cyclin_N"/>
</dbReference>
<dbReference type="InterPro" id="IPR033599">
    <property type="entry name" value="TAF1B/Rrn7"/>
</dbReference>
<dbReference type="InterPro" id="IPR021752">
    <property type="entry name" value="TF_Rrn7_Zf"/>
</dbReference>
<dbReference type="PANTHER" id="PTHR31576">
    <property type="entry name" value="TATA BOX-BINDING PROTEIN-ASSOCIATED FACTOR RNA POLYMERASE I SUBUNIT B"/>
    <property type="match status" value="1"/>
</dbReference>
<dbReference type="PANTHER" id="PTHR31576:SF2">
    <property type="entry name" value="TATA BOX-BINDING PROTEIN-ASSOCIATED FACTOR RNA POLYMERASE I SUBUNIT B"/>
    <property type="match status" value="1"/>
</dbReference>
<dbReference type="Pfam" id="PF20645">
    <property type="entry name" value="Rrn7_cyclin_C"/>
    <property type="match status" value="1"/>
</dbReference>
<dbReference type="Pfam" id="PF20644">
    <property type="entry name" value="Rrn7_cyclin_N"/>
    <property type="match status" value="1"/>
</dbReference>
<dbReference type="Pfam" id="PF11781">
    <property type="entry name" value="Zn_ribbon_RRN7"/>
    <property type="match status" value="1"/>
</dbReference>
<evidence type="ECO:0000250" key="1"/>
<evidence type="ECO:0000269" key="2">
    <source>
    </source>
</evidence>
<evidence type="ECO:0000269" key="3">
    <source>
    </source>
</evidence>
<evidence type="ECO:0000269" key="4">
    <source>
    </source>
</evidence>
<evidence type="ECO:0000269" key="5">
    <source>
    </source>
</evidence>
<evidence type="ECO:0000269" key="6">
    <source>
    </source>
</evidence>
<evidence type="ECO:0000269" key="7">
    <source>
    </source>
</evidence>
<evidence type="ECO:0000269" key="8">
    <source>
    </source>
</evidence>
<evidence type="ECO:0000269" key="9">
    <source>
    </source>
</evidence>
<evidence type="ECO:0000269" key="10">
    <source>
    </source>
</evidence>
<evidence type="ECO:0000269" key="11">
    <source>
    </source>
</evidence>
<evidence type="ECO:0000303" key="12">
    <source>
    </source>
</evidence>
<evidence type="ECO:0000305" key="13"/>
<evidence type="ECO:0000305" key="14">
    <source>
    </source>
</evidence>
<evidence type="ECO:0000305" key="15">
    <source>
    </source>
</evidence>
<evidence type="ECO:0007744" key="16">
    <source>
    </source>
</evidence>
<evidence type="ECO:0007744" key="17">
    <source>
    </source>
</evidence>
<reference key="1">
    <citation type="journal article" date="1994" name="Science">
        <title>Reconstitution of transcription factor SL1: exclusive binding of TBP by SL1 or TFIID subunits.</title>
        <authorList>
            <person name="Comai L."/>
            <person name="Zomerdijk J.C.B.M."/>
            <person name="Beckmann H."/>
            <person name="Zhou S."/>
            <person name="Admon A."/>
            <person name="Tjian R."/>
        </authorList>
    </citation>
    <scope>NUCLEOTIDE SEQUENCE [MRNA]</scope>
    <scope>PROTEIN SEQUENCE OF 11-20; 42-56; 93-110; 123-135; 264-276; 281-289; 311-321; 331-340; 396-407; 429-444; 448-466 AND 471-480</scope>
    <scope>FUNCTION</scope>
    <scope>INTERACTION WITH TBP; TAF1A AND TAF1C</scope>
    <scope>VARIANTS SER-6; ILE-282; ALA-351 AND ASP-462</scope>
</reference>
<reference key="2">
    <citation type="journal article" date="2004" name="Nat. Genet.">
        <title>Complete sequencing and characterization of 21,243 full-length human cDNAs.</title>
        <authorList>
            <person name="Ota T."/>
            <person name="Suzuki Y."/>
            <person name="Nishikawa T."/>
            <person name="Otsuki T."/>
            <person name="Sugiyama T."/>
            <person name="Irie R."/>
            <person name="Wakamatsu A."/>
            <person name="Hayashi K."/>
            <person name="Sato H."/>
            <person name="Nagai K."/>
            <person name="Kimura K."/>
            <person name="Makita H."/>
            <person name="Sekine M."/>
            <person name="Obayashi M."/>
            <person name="Nishi T."/>
            <person name="Shibahara T."/>
            <person name="Tanaka T."/>
            <person name="Ishii S."/>
            <person name="Yamamoto J."/>
            <person name="Saito K."/>
            <person name="Kawai Y."/>
            <person name="Isono Y."/>
            <person name="Nakamura Y."/>
            <person name="Nagahari K."/>
            <person name="Murakami K."/>
            <person name="Yasuda T."/>
            <person name="Iwayanagi T."/>
            <person name="Wagatsuma M."/>
            <person name="Shiratori A."/>
            <person name="Sudo H."/>
            <person name="Hosoiri T."/>
            <person name="Kaku Y."/>
            <person name="Kodaira H."/>
            <person name="Kondo H."/>
            <person name="Sugawara M."/>
            <person name="Takahashi M."/>
            <person name="Kanda K."/>
            <person name="Yokoi T."/>
            <person name="Furuya T."/>
            <person name="Kikkawa E."/>
            <person name="Omura Y."/>
            <person name="Abe K."/>
            <person name="Kamihara K."/>
            <person name="Katsuta N."/>
            <person name="Sato K."/>
            <person name="Tanikawa M."/>
            <person name="Yamazaki M."/>
            <person name="Ninomiya K."/>
            <person name="Ishibashi T."/>
            <person name="Yamashita H."/>
            <person name="Murakawa K."/>
            <person name="Fujimori K."/>
            <person name="Tanai H."/>
            <person name="Kimata M."/>
            <person name="Watanabe M."/>
            <person name="Hiraoka S."/>
            <person name="Chiba Y."/>
            <person name="Ishida S."/>
            <person name="Ono Y."/>
            <person name="Takiguchi S."/>
            <person name="Watanabe S."/>
            <person name="Yosida M."/>
            <person name="Hotuta T."/>
            <person name="Kusano J."/>
            <person name="Kanehori K."/>
            <person name="Takahashi-Fujii A."/>
            <person name="Hara H."/>
            <person name="Tanase T.-O."/>
            <person name="Nomura Y."/>
            <person name="Togiya S."/>
            <person name="Komai F."/>
            <person name="Hara R."/>
            <person name="Takeuchi K."/>
            <person name="Arita M."/>
            <person name="Imose N."/>
            <person name="Musashino K."/>
            <person name="Yuuki H."/>
            <person name="Oshima A."/>
            <person name="Sasaki N."/>
            <person name="Aotsuka S."/>
            <person name="Yoshikawa Y."/>
            <person name="Matsunawa H."/>
            <person name="Ichihara T."/>
            <person name="Shiohata N."/>
            <person name="Sano S."/>
            <person name="Moriya S."/>
            <person name="Momiyama H."/>
            <person name="Satoh N."/>
            <person name="Takami S."/>
            <person name="Terashima Y."/>
            <person name="Suzuki O."/>
            <person name="Nakagawa S."/>
            <person name="Senoh A."/>
            <person name="Mizoguchi H."/>
            <person name="Goto Y."/>
            <person name="Shimizu F."/>
            <person name="Wakebe H."/>
            <person name="Hishigaki H."/>
            <person name="Watanabe T."/>
            <person name="Sugiyama A."/>
            <person name="Takemoto M."/>
            <person name="Kawakami B."/>
            <person name="Yamazaki M."/>
            <person name="Watanabe K."/>
            <person name="Kumagai A."/>
            <person name="Itakura S."/>
            <person name="Fukuzumi Y."/>
            <person name="Fujimori Y."/>
            <person name="Komiyama M."/>
            <person name="Tashiro H."/>
            <person name="Tanigami A."/>
            <person name="Fujiwara T."/>
            <person name="Ono T."/>
            <person name="Yamada K."/>
            <person name="Fujii Y."/>
            <person name="Ozaki K."/>
            <person name="Hirao M."/>
            <person name="Ohmori Y."/>
            <person name="Kawabata A."/>
            <person name="Hikiji T."/>
            <person name="Kobatake N."/>
            <person name="Inagaki H."/>
            <person name="Ikema Y."/>
            <person name="Okamoto S."/>
            <person name="Okitani R."/>
            <person name="Kawakami T."/>
            <person name="Noguchi S."/>
            <person name="Itoh T."/>
            <person name="Shigeta K."/>
            <person name="Senba T."/>
            <person name="Matsumura K."/>
            <person name="Nakajima Y."/>
            <person name="Mizuno T."/>
            <person name="Morinaga M."/>
            <person name="Sasaki M."/>
            <person name="Togashi T."/>
            <person name="Oyama M."/>
            <person name="Hata H."/>
            <person name="Watanabe M."/>
            <person name="Komatsu T."/>
            <person name="Mizushima-Sugano J."/>
            <person name="Satoh T."/>
            <person name="Shirai Y."/>
            <person name="Takahashi Y."/>
            <person name="Nakagawa K."/>
            <person name="Okumura K."/>
            <person name="Nagase T."/>
            <person name="Nomura N."/>
            <person name="Kikuchi H."/>
            <person name="Masuho Y."/>
            <person name="Yamashita R."/>
            <person name="Nakai K."/>
            <person name="Yada T."/>
            <person name="Nakamura Y."/>
            <person name="Ohara O."/>
            <person name="Isogai T."/>
            <person name="Sugano S."/>
        </authorList>
    </citation>
    <scope>NUCLEOTIDE SEQUENCE [LARGE SCALE MRNA] (ISOFORM 3)</scope>
    <scope>VARIANTS ILE-282; ALA-351 AND ASP-462</scope>
    <source>
        <tissue>Corpus callosum</tissue>
    </source>
</reference>
<reference key="3">
    <citation type="journal article" date="2005" name="Nature">
        <title>Generation and annotation of the DNA sequences of human chromosomes 2 and 4.</title>
        <authorList>
            <person name="Hillier L.W."/>
            <person name="Graves T.A."/>
            <person name="Fulton R.S."/>
            <person name="Fulton L.A."/>
            <person name="Pepin K.H."/>
            <person name="Minx P."/>
            <person name="Wagner-McPherson C."/>
            <person name="Layman D."/>
            <person name="Wylie K."/>
            <person name="Sekhon M."/>
            <person name="Becker M.C."/>
            <person name="Fewell G.A."/>
            <person name="Delehaunty K.D."/>
            <person name="Miner T.L."/>
            <person name="Nash W.E."/>
            <person name="Kremitzki C."/>
            <person name="Oddy L."/>
            <person name="Du H."/>
            <person name="Sun H."/>
            <person name="Bradshaw-Cordum H."/>
            <person name="Ali J."/>
            <person name="Carter J."/>
            <person name="Cordes M."/>
            <person name="Harris A."/>
            <person name="Isak A."/>
            <person name="van Brunt A."/>
            <person name="Nguyen C."/>
            <person name="Du F."/>
            <person name="Courtney L."/>
            <person name="Kalicki J."/>
            <person name="Ozersky P."/>
            <person name="Abbott S."/>
            <person name="Armstrong J."/>
            <person name="Belter E.A."/>
            <person name="Caruso L."/>
            <person name="Cedroni M."/>
            <person name="Cotton M."/>
            <person name="Davidson T."/>
            <person name="Desai A."/>
            <person name="Elliott G."/>
            <person name="Erb T."/>
            <person name="Fronick C."/>
            <person name="Gaige T."/>
            <person name="Haakenson W."/>
            <person name="Haglund K."/>
            <person name="Holmes A."/>
            <person name="Harkins R."/>
            <person name="Kim K."/>
            <person name="Kruchowski S.S."/>
            <person name="Strong C.M."/>
            <person name="Grewal N."/>
            <person name="Goyea E."/>
            <person name="Hou S."/>
            <person name="Levy A."/>
            <person name="Martinka S."/>
            <person name="Mead K."/>
            <person name="McLellan M.D."/>
            <person name="Meyer R."/>
            <person name="Randall-Maher J."/>
            <person name="Tomlinson C."/>
            <person name="Dauphin-Kohlberg S."/>
            <person name="Kozlowicz-Reilly A."/>
            <person name="Shah N."/>
            <person name="Swearengen-Shahid S."/>
            <person name="Snider J."/>
            <person name="Strong J.T."/>
            <person name="Thompson J."/>
            <person name="Yoakum M."/>
            <person name="Leonard S."/>
            <person name="Pearman C."/>
            <person name="Trani L."/>
            <person name="Radionenko M."/>
            <person name="Waligorski J.E."/>
            <person name="Wang C."/>
            <person name="Rock S.M."/>
            <person name="Tin-Wollam A.-M."/>
            <person name="Maupin R."/>
            <person name="Latreille P."/>
            <person name="Wendl M.C."/>
            <person name="Yang S.-P."/>
            <person name="Pohl C."/>
            <person name="Wallis J.W."/>
            <person name="Spieth J."/>
            <person name="Bieri T.A."/>
            <person name="Berkowicz N."/>
            <person name="Nelson J.O."/>
            <person name="Osborne J."/>
            <person name="Ding L."/>
            <person name="Meyer R."/>
            <person name="Sabo A."/>
            <person name="Shotland Y."/>
            <person name="Sinha P."/>
            <person name="Wohldmann P.E."/>
            <person name="Cook L.L."/>
            <person name="Hickenbotham M.T."/>
            <person name="Eldred J."/>
            <person name="Williams D."/>
            <person name="Jones T.A."/>
            <person name="She X."/>
            <person name="Ciccarelli F.D."/>
            <person name="Izaurralde E."/>
            <person name="Taylor J."/>
            <person name="Schmutz J."/>
            <person name="Myers R.M."/>
            <person name="Cox D.R."/>
            <person name="Huang X."/>
            <person name="McPherson J.D."/>
            <person name="Mardis E.R."/>
            <person name="Clifton S.W."/>
            <person name="Warren W.C."/>
            <person name="Chinwalla A.T."/>
            <person name="Eddy S.R."/>
            <person name="Marra M.A."/>
            <person name="Ovcharenko I."/>
            <person name="Furey T.S."/>
            <person name="Miller W."/>
            <person name="Eichler E.E."/>
            <person name="Bork P."/>
            <person name="Suyama M."/>
            <person name="Torrents D."/>
            <person name="Waterston R.H."/>
            <person name="Wilson R.K."/>
        </authorList>
    </citation>
    <scope>NUCLEOTIDE SEQUENCE [LARGE SCALE GENOMIC DNA]</scope>
</reference>
<reference key="4">
    <citation type="journal article" date="2004" name="Genome Res.">
        <title>The status, quality, and expansion of the NIH full-length cDNA project: the Mammalian Gene Collection (MGC).</title>
        <authorList>
            <consortium name="The MGC Project Team"/>
        </authorList>
    </citation>
    <scope>NUCLEOTIDE SEQUENCE [LARGE SCALE MRNA]</scope>
    <scope>VARIANTS SER-6; ILE-282; ALA-351 AND ASP-462</scope>
    <source>
        <tissue>Colon</tissue>
    </source>
</reference>
<reference key="5">
    <citation type="journal article" date="1994" name="Science">
        <title>Assembly of transcriptionally active RNA polymerase I initiation factor SL1 from recombinant subunits.</title>
        <authorList>
            <person name="Zomerdijk J.C."/>
            <person name="Beckmann H."/>
            <person name="Comai L."/>
            <person name="Tjian R."/>
        </authorList>
    </citation>
    <scope>FUNCTION</scope>
</reference>
<reference key="6">
    <citation type="journal article" date="1995" name="Science">
        <title>Coactivator and promoter-selective properties of RNA polymerase I TAFs.</title>
        <authorList>
            <person name="Beckmann H."/>
            <person name="Chen J.L."/>
            <person name="O'Brien T."/>
            <person name="Tjian R."/>
        </authorList>
    </citation>
    <scope>FUNCTION</scope>
    <scope>DNA-BINDING</scope>
</reference>
<reference key="7">
    <citation type="journal article" date="2000" name="Cytogenet. Cell Genet.">
        <title>Genomic localization of the human genes TAF1A, TAF1B and TAF1C, encoding TAF(I)48, TAF(I)63 and TAF(I)110 subunits of class I general transcription initiation factor SL1.</title>
        <authorList>
            <person name="Di Pietro C."/>
            <person name="Rapisarda A."/>
            <person name="Amico V."/>
            <person name="Bonaiuto C."/>
            <person name="Viola A."/>
            <person name="Scalia M."/>
            <person name="Motta S."/>
            <person name="Amato A."/>
            <person name="Engel H."/>
            <person name="Messina A."/>
            <person name="Sichel G."/>
            <person name="Grzeschik K."/>
            <person name="Purrello M."/>
        </authorList>
    </citation>
    <scope>IDENTIFICATION</scope>
</reference>
<reference key="8">
    <citation type="journal article" date="2001" name="EMBO J.">
        <title>hRRN3 is essential in the SL1-mediated recruitment of RNA polymerase I to rRNA gene promoters.</title>
        <authorList>
            <person name="Miller G."/>
            <person name="Panov K.I."/>
            <person name="Friedrich J.K."/>
            <person name="Trinkle-Mulcahy L."/>
            <person name="Lamond A.I."/>
            <person name="Zomerdijk J.C.B.M."/>
        </authorList>
    </citation>
    <scope>FUNCTION OF THE SL1/TIF-IB COMPLEX</scope>
    <scope>SUBUNIT</scope>
    <scope>INTERACTION WITH RRN3</scope>
    <scope>SUBCELLULAR LOCATION</scope>
</reference>
<reference key="9">
    <citation type="journal article" date="2001" name="Mol. Cell. Biol.">
        <title>A step subsequent to preinitiation complex assembly at the ribosomal RNA gene promoter is rate limiting for human RNA polymerase I-dependent transcription.</title>
        <authorList>
            <person name="Panov K.I."/>
            <person name="Friedrich J.K."/>
            <person name="Zomerdijk J.C."/>
        </authorList>
    </citation>
    <scope>FUNCTION OF THE SL1/TIF-IB COMPLEX</scope>
    <scope>SUBUNIT</scope>
    <scope>SUBCELLULAR LOCATION</scope>
</reference>
<reference key="10">
    <citation type="journal article" date="2005" name="J. Biol. Chem.">
        <title>TBP-TAF complex SL1 directs RNA polymerase I pre-initiation complex formation and stabilizes upstream binding factor at the rDNA promoter.</title>
        <authorList>
            <person name="Friedrich J.K."/>
            <person name="Panov K.I."/>
            <person name="Cabart P."/>
            <person name="Russell J."/>
            <person name="Zomerdijk J.C.B.M."/>
        </authorList>
    </citation>
    <scope>FUNCTION OF THE SL1/TIF-IB COMPLEX</scope>
</reference>
<reference key="11">
    <citation type="journal article" date="2009" name="Science">
        <title>Lysine acetylation targets protein complexes and co-regulates major cellular functions.</title>
        <authorList>
            <person name="Choudhary C."/>
            <person name="Kumar C."/>
            <person name="Gnad F."/>
            <person name="Nielsen M.L."/>
            <person name="Rehman M."/>
            <person name="Walther T.C."/>
            <person name="Olsen J.V."/>
            <person name="Mann M."/>
        </authorList>
    </citation>
    <scope>ACETYLATION [LARGE SCALE ANALYSIS] AT LYS-440</scope>
    <scope>IDENTIFICATION BY MASS SPECTROMETRY [LARGE SCALE ANALYSIS]</scope>
</reference>
<reference key="12">
    <citation type="journal article" date="2011" name="Science">
        <title>Yeast Rrn7 and human TAF1B are TFIIB-related RNA polymerase I general transcription factors.</title>
        <authorList>
            <person name="Knutson B.A."/>
            <person name="Hahn S."/>
        </authorList>
    </citation>
    <scope>FUNCTION</scope>
</reference>
<reference key="13">
    <citation type="journal article" date="2011" name="Science">
        <title>TAF1B is a TFIIB-like component of the basal transcription machinery for RNA polymerase I.</title>
        <authorList>
            <person name="Naidu S."/>
            <person name="Friedrich J.K."/>
            <person name="Russell J."/>
            <person name="Zomerdijk J.C."/>
        </authorList>
    </citation>
    <scope>FUNCTION</scope>
    <scope>MUTAGENESIS OF CYS-13; CYS-31 AND CYS-34</scope>
</reference>
<reference key="14">
    <citation type="journal article" date="2012" name="Proc. Natl. Acad. Sci. U.S.A.">
        <title>N-terminal acetylome analyses and functional insights of the N-terminal acetyltransferase NatB.</title>
        <authorList>
            <person name="Van Damme P."/>
            <person name="Lasa M."/>
            <person name="Polevoda B."/>
            <person name="Gazquez C."/>
            <person name="Elosegui-Artola A."/>
            <person name="Kim D.S."/>
            <person name="De Juan-Pardo E."/>
            <person name="Demeyer K."/>
            <person name="Hole K."/>
            <person name="Larrea E."/>
            <person name="Timmerman E."/>
            <person name="Prieto J."/>
            <person name="Arnesen T."/>
            <person name="Sherman F."/>
            <person name="Gevaert K."/>
            <person name="Aldabe R."/>
        </authorList>
    </citation>
    <scope>ACETYLATION [LARGE SCALE ANALYSIS] AT MET-1</scope>
    <scope>IDENTIFICATION BY MASS SPECTROMETRY [LARGE SCALE ANALYSIS]</scope>
</reference>
<feature type="chain" id="PRO_0000261392" description="TATA box-binding protein-associated factor RNA polymerase I subunit B">
    <location>
        <begin position="1"/>
        <end position="588"/>
    </location>
</feature>
<feature type="zinc finger region" description="RRN7-type">
    <location>
        <begin position="4"/>
        <end position="39"/>
    </location>
</feature>
<feature type="region of interest" description="B-reader">
    <location>
        <begin position="40"/>
        <end position="68"/>
    </location>
</feature>
<feature type="region of interest" description="B-linker">
    <location>
        <begin position="69"/>
        <end position="73"/>
    </location>
</feature>
<feature type="region of interest" description="N-terminal cyclin fold">
    <location>
        <begin position="74"/>
        <end position="261"/>
    </location>
</feature>
<feature type="region of interest" description="C-terminal cyclin fold">
    <location>
        <begin position="262"/>
        <end position="372"/>
    </location>
</feature>
<feature type="binding site" evidence="13">
    <location>
        <position position="13"/>
    </location>
    <ligand>
        <name>Zn(2+)</name>
        <dbReference type="ChEBI" id="CHEBI:29105"/>
    </ligand>
</feature>
<feature type="binding site" evidence="13">
    <location>
        <position position="16"/>
    </location>
    <ligand>
        <name>Zn(2+)</name>
        <dbReference type="ChEBI" id="CHEBI:29105"/>
    </ligand>
</feature>
<feature type="binding site" evidence="13">
    <location>
        <position position="31"/>
    </location>
    <ligand>
        <name>Zn(2+)</name>
        <dbReference type="ChEBI" id="CHEBI:29105"/>
    </ligand>
</feature>
<feature type="binding site" evidence="13">
    <location>
        <position position="34"/>
    </location>
    <ligand>
        <name>Zn(2+)</name>
        <dbReference type="ChEBI" id="CHEBI:29105"/>
    </ligand>
</feature>
<feature type="modified residue" description="N-acetylmethionine" evidence="17">
    <location>
        <position position="1"/>
    </location>
</feature>
<feature type="modified residue" description="N6-acetyllysine" evidence="16">
    <location>
        <position position="440"/>
    </location>
</feature>
<feature type="splice variant" id="VSP_042954" description="In isoform 3." evidence="12">
    <location>
        <begin position="1"/>
        <end position="255"/>
    </location>
</feature>
<feature type="splice variant" id="VSP_021677" description="In isoform 2." evidence="13">
    <location>
        <begin position="523"/>
        <end position="588"/>
    </location>
</feature>
<feature type="sequence variant" id="VAR_029378" description="In dbSNP:rs2303914." evidence="5 10">
    <original>A</original>
    <variation>S</variation>
    <location>
        <position position="6"/>
    </location>
</feature>
<feature type="sequence variant" id="VAR_029379" description="In dbSNP:rs396190." evidence="4 5 10">
    <original>V</original>
    <variation>I</variation>
    <location>
        <position position="282"/>
    </location>
</feature>
<feature type="sequence variant" id="VAR_057260" description="In dbSNP:rs16867223.">
    <original>R</original>
    <variation>H</variation>
    <location>
        <position position="292"/>
    </location>
</feature>
<feature type="sequence variant" id="VAR_029380" description="In dbSNP:rs1054565." evidence="4 5 10">
    <original>T</original>
    <variation>A</variation>
    <location>
        <position position="351"/>
    </location>
</feature>
<feature type="sequence variant" id="VAR_029381" description="In dbSNP:rs1820965." evidence="4 5 10">
    <original>E</original>
    <variation>D</variation>
    <location>
        <position position="462"/>
    </location>
</feature>
<feature type="sequence variant" id="VAR_029382" description="In dbSNP:rs16867245.">
    <original>T</original>
    <variation>M</variation>
    <location>
        <position position="487"/>
    </location>
</feature>
<feature type="mutagenesis site" description="Abolishes Pol I transcription but not recruitment of SL1/TIF-IB complex to rDNA promoters." evidence="8">
    <original>C</original>
    <variation>A</variation>
    <location>
        <position position="13"/>
    </location>
</feature>
<feature type="mutagenesis site" description="Abolishes Pol I transcription but not recruitment of SL1/TIF-IB complex to rDNA promoters." evidence="8">
    <original>C</original>
    <variation>A</variation>
    <location>
        <position position="31"/>
    </location>
</feature>
<feature type="mutagenesis site" description="Abolishes Pol I transcription but not recruitment of SL1/TIF-IB complex to rDNA promoters." evidence="8">
    <original>C</original>
    <variation>A</variation>
    <location>
        <position position="34"/>
    </location>
</feature>
<feature type="sequence conflict" description="In Ref. 1; AAA62863." evidence="13" ref="1">
    <original>M</original>
    <variation>L</variation>
    <location>
        <position position="1"/>
    </location>
</feature>
<feature type="sequence conflict" description="In Ref. 1; AAA62863." evidence="13" ref="1">
    <original>L</original>
    <variation>M</variation>
    <location>
        <position position="372"/>
    </location>
</feature>
<feature type="sequence conflict" description="In Ref. 1; AAA62863." evidence="13" ref="1">
    <original>C</original>
    <variation>W</variation>
    <location>
        <position position="522"/>
    </location>
</feature>
<accession>Q53T94</accession>
<accession>B4DI42</accession>
<accession>F8WD72</accession>
<accession>Q15574</accession>
<accession>Q8WVC3</accession>